<protein>
    <recommendedName>
        <fullName evidence="1">3-deoxy-D-manno-octulosonate 8-phosphate phosphatase KdsC</fullName>
        <ecNumber evidence="1">3.1.3.45</ecNumber>
    </recommendedName>
    <alternativeName>
        <fullName evidence="1">KDO 8-P phosphatase</fullName>
    </alternativeName>
</protein>
<comment type="function">
    <text evidence="1">Catalyzes the hydrolysis of 3-deoxy-D-manno-octulosonate 8-phosphate (KDO 8-P) to 3-deoxy-D-manno-octulosonate (KDO) and inorganic phosphate.</text>
</comment>
<comment type="catalytic activity">
    <reaction evidence="1">
        <text>3-deoxy-alpha-D-manno-2-octulosonate-8-phosphate + H2O = 3-deoxy-alpha-D-manno-oct-2-ulosonate + phosphate</text>
        <dbReference type="Rhea" id="RHEA:11500"/>
        <dbReference type="ChEBI" id="CHEBI:15377"/>
        <dbReference type="ChEBI" id="CHEBI:43474"/>
        <dbReference type="ChEBI" id="CHEBI:85985"/>
        <dbReference type="ChEBI" id="CHEBI:85986"/>
        <dbReference type="EC" id="3.1.3.45"/>
    </reaction>
</comment>
<comment type="cofactor">
    <cofactor evidence="1">
        <name>Mg(2+)</name>
        <dbReference type="ChEBI" id="CHEBI:18420"/>
    </cofactor>
</comment>
<comment type="pathway">
    <text evidence="1">Carbohydrate biosynthesis; 3-deoxy-D-manno-octulosonate biosynthesis; 3-deoxy-D-manno-octulosonate from D-ribulose 5-phosphate: step 3/3.</text>
</comment>
<comment type="pathway">
    <text evidence="1">Bacterial outer membrane biogenesis; lipopolysaccharide biosynthesis.</text>
</comment>
<comment type="subunit">
    <text evidence="1">Homotetramer.</text>
</comment>
<comment type="disruption phenotype">
    <text evidence="3">Not essential for growth.</text>
</comment>
<comment type="similarity">
    <text evidence="5">Belongs to the KdsC family.</text>
</comment>
<comment type="sequence caution" evidence="5">
    <conflict type="frameshift">
        <sequence resource="EMBL-CDS" id="AAA57999"/>
    </conflict>
</comment>
<comment type="sequence caution" evidence="5">
    <conflict type="erroneous initiation">
        <sequence resource="EMBL-CDS" id="AAA58000"/>
    </conflict>
    <text>Truncated N-terminus.</text>
</comment>
<comment type="sequence caution" evidence="5">
    <conflict type="frameshift">
        <sequence resource="EMBL-CDS" id="AAA58000"/>
    </conflict>
</comment>
<organism>
    <name type="scientific">Escherichia coli (strain K12)</name>
    <dbReference type="NCBI Taxonomy" id="83333"/>
    <lineage>
        <taxon>Bacteria</taxon>
        <taxon>Pseudomonadati</taxon>
        <taxon>Pseudomonadota</taxon>
        <taxon>Gammaproteobacteria</taxon>
        <taxon>Enterobacterales</taxon>
        <taxon>Enterobacteriaceae</taxon>
        <taxon>Escherichia</taxon>
    </lineage>
</organism>
<name>KDSC_ECOLI</name>
<evidence type="ECO:0000250" key="1">
    <source>
        <dbReference type="UniProtKB" id="A0A140N5J7"/>
    </source>
</evidence>
<evidence type="ECO:0000250" key="2">
    <source>
        <dbReference type="UniProtKB" id="P67653"/>
    </source>
</evidence>
<evidence type="ECO:0000269" key="3">
    <source>
    </source>
</evidence>
<evidence type="ECO:0000303" key="4">
    <source>
    </source>
</evidence>
<evidence type="ECO:0000305" key="5"/>
<dbReference type="EC" id="3.1.3.45" evidence="1"/>
<dbReference type="EMBL" id="U18997">
    <property type="protein sequence ID" value="AAA57999.1"/>
    <property type="status" value="ALT_FRAME"/>
    <property type="molecule type" value="Genomic_DNA"/>
</dbReference>
<dbReference type="EMBL" id="U18997">
    <property type="protein sequence ID" value="AAA58000.1"/>
    <property type="status" value="ALT_SEQ"/>
    <property type="molecule type" value="Genomic_DNA"/>
</dbReference>
<dbReference type="EMBL" id="U00096">
    <property type="protein sequence ID" value="AAC76230.1"/>
    <property type="molecule type" value="Genomic_DNA"/>
</dbReference>
<dbReference type="EMBL" id="AP009048">
    <property type="protein sequence ID" value="BAE77242.1"/>
    <property type="molecule type" value="Genomic_DNA"/>
</dbReference>
<dbReference type="PIR" id="H65110">
    <property type="entry name" value="H65110"/>
</dbReference>
<dbReference type="RefSeq" id="NP_417665.1">
    <property type="nucleotide sequence ID" value="NC_000913.3"/>
</dbReference>
<dbReference type="RefSeq" id="WP_000030005.1">
    <property type="nucleotide sequence ID" value="NZ_SSZK01000007.1"/>
</dbReference>
<dbReference type="SMR" id="P0ABZ4"/>
<dbReference type="BioGRID" id="4261882">
    <property type="interactions" value="248"/>
</dbReference>
<dbReference type="DIP" id="DIP-48034N"/>
<dbReference type="FunCoup" id="P0ABZ4">
    <property type="interactions" value="395"/>
</dbReference>
<dbReference type="IntAct" id="P0ABZ4">
    <property type="interactions" value="2"/>
</dbReference>
<dbReference type="STRING" id="511145.b3198"/>
<dbReference type="jPOST" id="P0ABZ4"/>
<dbReference type="PaxDb" id="511145-b3198"/>
<dbReference type="EnsemblBacteria" id="AAC76230">
    <property type="protein sequence ID" value="AAC76230"/>
    <property type="gene ID" value="b3198"/>
</dbReference>
<dbReference type="GeneID" id="93778783"/>
<dbReference type="GeneID" id="947717"/>
<dbReference type="KEGG" id="ecj:JW3165"/>
<dbReference type="KEGG" id="eco:b3198"/>
<dbReference type="KEGG" id="ecoc:C3026_17405"/>
<dbReference type="PATRIC" id="fig|1411691.4.peg.3533"/>
<dbReference type="EchoBASE" id="EB2656"/>
<dbReference type="eggNOG" id="COG1778">
    <property type="taxonomic scope" value="Bacteria"/>
</dbReference>
<dbReference type="HOGENOM" id="CLU_106694_0_1_6"/>
<dbReference type="InParanoid" id="P0ABZ4"/>
<dbReference type="OMA" id="GMTLWQK"/>
<dbReference type="OrthoDB" id="9805604at2"/>
<dbReference type="PhylomeDB" id="P0ABZ4"/>
<dbReference type="BioCyc" id="EcoCyc:G7663-MONOMER"/>
<dbReference type="SABIO-RK" id="P0ABZ4"/>
<dbReference type="UniPathway" id="UPA00030"/>
<dbReference type="UniPathway" id="UPA00357">
    <property type="reaction ID" value="UER00475"/>
</dbReference>
<dbReference type="PRO" id="PR:P0ABZ4"/>
<dbReference type="Proteomes" id="UP000000625">
    <property type="component" value="Chromosome"/>
</dbReference>
<dbReference type="GO" id="GO:0005829">
    <property type="term" value="C:cytosol"/>
    <property type="evidence" value="ECO:0000314"/>
    <property type="project" value="EcoCyc"/>
</dbReference>
<dbReference type="GO" id="GO:0019143">
    <property type="term" value="F:3-deoxy-manno-octulosonate-8-phosphatase activity"/>
    <property type="evidence" value="ECO:0007669"/>
    <property type="project" value="UniProtKB-EC"/>
</dbReference>
<dbReference type="GO" id="GO:0046872">
    <property type="term" value="F:metal ion binding"/>
    <property type="evidence" value="ECO:0007669"/>
    <property type="project" value="UniProtKB-KW"/>
</dbReference>
<dbReference type="GO" id="GO:0009103">
    <property type="term" value="P:lipopolysaccharide biosynthetic process"/>
    <property type="evidence" value="ECO:0007669"/>
    <property type="project" value="UniProtKB-UniPathway"/>
</dbReference>
<dbReference type="CDD" id="cd01630">
    <property type="entry name" value="HAD_KDO-like"/>
    <property type="match status" value="1"/>
</dbReference>
<dbReference type="FunFam" id="3.40.50.1000:FF:000029">
    <property type="entry name" value="3-deoxy-D-manno-octulosonate 8-phosphate phosphatase KdsC"/>
    <property type="match status" value="1"/>
</dbReference>
<dbReference type="Gene3D" id="3.40.50.1000">
    <property type="entry name" value="HAD superfamily/HAD-like"/>
    <property type="match status" value="1"/>
</dbReference>
<dbReference type="InterPro" id="IPR050793">
    <property type="entry name" value="CMP-NeuNAc_synthase"/>
</dbReference>
<dbReference type="InterPro" id="IPR036412">
    <property type="entry name" value="HAD-like_sf"/>
</dbReference>
<dbReference type="InterPro" id="IPR023214">
    <property type="entry name" value="HAD_sf"/>
</dbReference>
<dbReference type="InterPro" id="IPR010023">
    <property type="entry name" value="KdsC_fam"/>
</dbReference>
<dbReference type="NCBIfam" id="TIGR01670">
    <property type="entry name" value="KdsC-phosphatas"/>
    <property type="match status" value="1"/>
</dbReference>
<dbReference type="NCBIfam" id="NF007019">
    <property type="entry name" value="PRK09484.1"/>
    <property type="match status" value="1"/>
</dbReference>
<dbReference type="PANTHER" id="PTHR21485">
    <property type="entry name" value="HAD SUPERFAMILY MEMBERS CMAS AND KDSC"/>
    <property type="match status" value="1"/>
</dbReference>
<dbReference type="PANTHER" id="PTHR21485:SF6">
    <property type="entry name" value="N-ACYLNEURAMINATE CYTIDYLYLTRANSFERASE-RELATED"/>
    <property type="match status" value="1"/>
</dbReference>
<dbReference type="Pfam" id="PF08282">
    <property type="entry name" value="Hydrolase_3"/>
    <property type="match status" value="1"/>
</dbReference>
<dbReference type="PIRSF" id="PIRSF006118">
    <property type="entry name" value="KDO8-P_Ptase"/>
    <property type="match status" value="1"/>
</dbReference>
<dbReference type="SFLD" id="SFLDG01138">
    <property type="entry name" value="C1.6.2:_Deoxy-d-mannose-octulo"/>
    <property type="match status" value="1"/>
</dbReference>
<dbReference type="SFLD" id="SFLDS00003">
    <property type="entry name" value="Haloacid_Dehalogenase"/>
    <property type="match status" value="1"/>
</dbReference>
<dbReference type="SUPFAM" id="SSF56784">
    <property type="entry name" value="HAD-like"/>
    <property type="match status" value="1"/>
</dbReference>
<accession>P0ABZ4</accession>
<accession>P45396</accession>
<accession>P45398</accession>
<accession>Q2M914</accession>
<keyword id="KW-0378">Hydrolase</keyword>
<keyword id="KW-0448">Lipopolysaccharide biosynthesis</keyword>
<keyword id="KW-0460">Magnesium</keyword>
<keyword id="KW-0479">Metal-binding</keyword>
<keyword id="KW-1185">Reference proteome</keyword>
<proteinExistence type="inferred from homology"/>
<reference key="1">
    <citation type="journal article" date="1997" name="Science">
        <title>The complete genome sequence of Escherichia coli K-12.</title>
        <authorList>
            <person name="Blattner F.R."/>
            <person name="Plunkett G. III"/>
            <person name="Bloch C.A."/>
            <person name="Perna N.T."/>
            <person name="Burland V."/>
            <person name="Riley M."/>
            <person name="Collado-Vides J."/>
            <person name="Glasner J.D."/>
            <person name="Rode C.K."/>
            <person name="Mayhew G.F."/>
            <person name="Gregor J."/>
            <person name="Davis N.W."/>
            <person name="Kirkpatrick H.A."/>
            <person name="Goeden M.A."/>
            <person name="Rose D.J."/>
            <person name="Mau B."/>
            <person name="Shao Y."/>
        </authorList>
    </citation>
    <scope>NUCLEOTIDE SEQUENCE [LARGE SCALE GENOMIC DNA]</scope>
    <source>
        <strain>K12 / MG1655 / ATCC 47076</strain>
    </source>
</reference>
<reference key="2">
    <citation type="journal article" date="2006" name="Mol. Syst. Biol.">
        <title>Highly accurate genome sequences of Escherichia coli K-12 strains MG1655 and W3110.</title>
        <authorList>
            <person name="Hayashi K."/>
            <person name="Morooka N."/>
            <person name="Yamamoto Y."/>
            <person name="Fujita K."/>
            <person name="Isono K."/>
            <person name="Choi S."/>
            <person name="Ohtsubo E."/>
            <person name="Baba T."/>
            <person name="Wanner B.L."/>
            <person name="Mori H."/>
            <person name="Horiuchi T."/>
        </authorList>
    </citation>
    <scope>NUCLEOTIDE SEQUENCE [LARGE SCALE GENOMIC DNA]</scope>
    <source>
        <strain>K12 / W3110 / ATCC 27325 / DSM 5911</strain>
    </source>
</reference>
<reference key="3">
    <citation type="journal article" date="2006" name="Res. Microbiol.">
        <title>Non-essential KDO biosynthesis and new essential cell envelope biogenesis genes in the Escherichia coli yrbG-yhbG locus.</title>
        <authorList>
            <person name="Sperandeo P."/>
            <person name="Pozzi C."/>
            <person name="Deho G."/>
            <person name="Polissi A."/>
        </authorList>
    </citation>
    <scope>DISRUPTION PHENOTYPE</scope>
</reference>
<gene>
    <name evidence="4" type="primary">kdsC</name>
    <name type="synonym">yrbI</name>
    <name type="synonym">yrbJ</name>
    <name type="ordered locus">b3198</name>
    <name type="ordered locus">JW3165</name>
</gene>
<feature type="initiator methionine" description="Removed" evidence="1">
    <location>
        <position position="1"/>
    </location>
</feature>
<feature type="chain" id="PRO_0000201696" description="3-deoxy-D-manno-octulosonate 8-phosphate phosphatase KdsC">
    <location>
        <begin position="2"/>
        <end position="188"/>
    </location>
</feature>
<feature type="binding site" evidence="2">
    <location>
        <position position="32"/>
    </location>
    <ligand>
        <name>Mg(2+)</name>
        <dbReference type="ChEBI" id="CHEBI:18420"/>
    </ligand>
</feature>
<feature type="binding site" evidence="2">
    <location>
        <position position="34"/>
    </location>
    <ligand>
        <name>Mg(2+)</name>
        <dbReference type="ChEBI" id="CHEBI:18420"/>
    </ligand>
</feature>
<feature type="binding site" evidence="2">
    <location>
        <position position="34"/>
    </location>
    <ligand>
        <name>substrate</name>
    </ligand>
</feature>
<feature type="binding site" evidence="2">
    <location>
        <begin position="55"/>
        <end position="59"/>
    </location>
    <ligand>
        <name>substrate</name>
    </ligand>
</feature>
<feature type="binding site" evidence="2">
    <location>
        <position position="63"/>
    </location>
    <ligand>
        <name>substrate</name>
    </ligand>
</feature>
<feature type="binding site" evidence="2">
    <location>
        <position position="78"/>
    </location>
    <ligand>
        <name>substrate</name>
    </ligand>
</feature>
<feature type="binding site" evidence="2">
    <location>
        <position position="86"/>
    </location>
    <ligand>
        <name>substrate</name>
    </ligand>
</feature>
<feature type="binding site" evidence="2">
    <location>
        <position position="102"/>
    </location>
    <ligand>
        <name>substrate</name>
    </ligand>
</feature>
<feature type="binding site" evidence="2">
    <location>
        <position position="125"/>
    </location>
    <ligand>
        <name>Mg(2+)</name>
        <dbReference type="ChEBI" id="CHEBI:18420"/>
    </ligand>
</feature>
<sequence length="188" mass="19997">MSKAGASLATCYGPVSADVIAKAENIRLLILDVDGVLSDGLIYMGNNGEELKAFNVRDGYGIRCALTSDIEVAIITGRKAKLVEDRCATLGITHLYQGQSNKLIAFSDLLEKLAIAPENVAYVGDDLIDWPVMEKVGLSVAVADAHPLLIPRADYVTRIAGGRGAVREVCDLLLLAQGKLDEAKGQSI</sequence>